<sequence length="240" mass="26359">MANITLSTQHYRIHRSDVEPVKEKTTDKDVFAKSITAVRNSFISLSTSLSDRFSLHLQTDIPTTHFHRGSASEGRAVLTSKTVKDFMLQKLNSLDIKGNASKDPAYARQTCEAMLSAVYSNNKDHCCKLLISKGVSITPFLKEIGEAAQNAGLPGEIKNGVFTPGGAGANPFVVPLIAAASIKYPHMFINHNQQVSFKAYAEKIVMKEVTPLFNKGTMPTPQQFQLTIENIANKYLQNAS</sequence>
<dbReference type="EMBL" id="CP000026">
    <property type="protein sequence ID" value="AAV76990.1"/>
    <property type="molecule type" value="Genomic_DNA"/>
</dbReference>
<dbReference type="RefSeq" id="WP_001284212.1">
    <property type="nucleotide sequence ID" value="NC_006511.1"/>
</dbReference>
<dbReference type="BMRB" id="Q5PHN0"/>
<dbReference type="SMR" id="Q5PHN0"/>
<dbReference type="KEGG" id="spt:SPA1018"/>
<dbReference type="HOGENOM" id="CLU_107159_0_0_6"/>
<dbReference type="Proteomes" id="UP000008185">
    <property type="component" value="Chromosome"/>
</dbReference>
<dbReference type="GO" id="GO:0005576">
    <property type="term" value="C:extracellular region"/>
    <property type="evidence" value="ECO:0007669"/>
    <property type="project" value="UniProtKB-SubCell"/>
</dbReference>
<dbReference type="GO" id="GO:0005096">
    <property type="term" value="F:GTPase activator activity"/>
    <property type="evidence" value="ECO:0007669"/>
    <property type="project" value="UniProtKB-KW"/>
</dbReference>
<dbReference type="GO" id="GO:0005085">
    <property type="term" value="F:guanyl-nucleotide exchange factor activity"/>
    <property type="evidence" value="ECO:0007669"/>
    <property type="project" value="UniProtKB-KW"/>
</dbReference>
<dbReference type="GO" id="GO:0030036">
    <property type="term" value="P:actin cytoskeleton organization"/>
    <property type="evidence" value="ECO:0007669"/>
    <property type="project" value="InterPro"/>
</dbReference>
<dbReference type="Gene3D" id="1.10.4120.10">
    <property type="entry name" value="SopE-like, GEF domain"/>
    <property type="match status" value="1"/>
</dbReference>
<dbReference type="InterPro" id="IPR005414">
    <property type="entry name" value="SopE"/>
</dbReference>
<dbReference type="InterPro" id="IPR035949">
    <property type="entry name" value="SopE-like_GEF_dom_sf"/>
</dbReference>
<dbReference type="InterPro" id="IPR016019">
    <property type="entry name" value="SopE_GEF_dom"/>
</dbReference>
<dbReference type="InterPro" id="IPR016018">
    <property type="entry name" value="SopE_N_dom"/>
</dbReference>
<dbReference type="NCBIfam" id="NF011810">
    <property type="entry name" value="PRK15280.1"/>
    <property type="match status" value="1"/>
</dbReference>
<dbReference type="Pfam" id="PF05364">
    <property type="entry name" value="SecIII_SopE_N"/>
    <property type="match status" value="1"/>
</dbReference>
<dbReference type="Pfam" id="PF07487">
    <property type="entry name" value="SopE_GEF"/>
    <property type="match status" value="1"/>
</dbReference>
<dbReference type="PIRSF" id="PIRSF034781">
    <property type="entry name" value="SecIII_sopE"/>
    <property type="match status" value="1"/>
</dbReference>
<dbReference type="PRINTS" id="PR01593">
    <property type="entry name" value="SOPEPROTEIN"/>
</dbReference>
<dbReference type="SUPFAM" id="SSF81832">
    <property type="entry name" value="SopE-like GEF domain"/>
    <property type="match status" value="1"/>
</dbReference>
<reference key="1">
    <citation type="journal article" date="2004" name="Nat. Genet.">
        <title>Comparison of genome degradation in Paratyphi A and Typhi, human-restricted serovars of Salmonella enterica that cause typhoid.</title>
        <authorList>
            <person name="McClelland M."/>
            <person name="Sanderson K.E."/>
            <person name="Clifton S.W."/>
            <person name="Latreille P."/>
            <person name="Porwollik S."/>
            <person name="Sabo A."/>
            <person name="Meyer R."/>
            <person name="Bieri T."/>
            <person name="Ozersky P."/>
            <person name="McLellan M."/>
            <person name="Harkins C.R."/>
            <person name="Wang C."/>
            <person name="Nguyen C."/>
            <person name="Berghoff A."/>
            <person name="Elliott G."/>
            <person name="Kohlberg S."/>
            <person name="Strong C."/>
            <person name="Du F."/>
            <person name="Carter J."/>
            <person name="Kremizki C."/>
            <person name="Layman D."/>
            <person name="Leonard S."/>
            <person name="Sun H."/>
            <person name="Fulton L."/>
            <person name="Nash W."/>
            <person name="Miner T."/>
            <person name="Minx P."/>
            <person name="Delehaunty K."/>
            <person name="Fronick C."/>
            <person name="Magrini V."/>
            <person name="Nhan M."/>
            <person name="Warren W."/>
            <person name="Florea L."/>
            <person name="Spieth J."/>
            <person name="Wilson R.K."/>
        </authorList>
    </citation>
    <scope>NUCLEOTIDE SEQUENCE [LARGE SCALE GENOMIC DNA]</scope>
    <source>
        <strain>ATCC 9150 / SARB42</strain>
    </source>
</reference>
<protein>
    <recommendedName>
        <fullName>Guanine nucleotide exchange factor sopE2</fullName>
    </recommendedName>
    <alternativeName>
        <fullName>Effector protein sopE2</fullName>
    </alternativeName>
    <alternativeName>
        <fullName>Toxin sopE2</fullName>
    </alternativeName>
</protein>
<evidence type="ECO:0000250" key="1"/>
<evidence type="ECO:0000305" key="2"/>
<gene>
    <name type="primary">sopE2</name>
    <name type="ordered locus">SPA1018</name>
</gene>
<feature type="initiator methionine" description="Removed" evidence="1">
    <location>
        <position position="1"/>
    </location>
</feature>
<feature type="chain" id="PRO_0000220741" description="Guanine nucleotide exchange factor sopE2">
    <location>
        <begin position="2"/>
        <end position="240"/>
    </location>
</feature>
<feature type="region of interest" description="GEF catalytic domain" evidence="1">
    <location>
        <begin position="78"/>
        <end position="240"/>
    </location>
</feature>
<accession>Q5PHN0</accession>
<organism>
    <name type="scientific">Salmonella paratyphi A (strain ATCC 9150 / SARB42)</name>
    <dbReference type="NCBI Taxonomy" id="295319"/>
    <lineage>
        <taxon>Bacteria</taxon>
        <taxon>Pseudomonadati</taxon>
        <taxon>Pseudomonadota</taxon>
        <taxon>Gammaproteobacteria</taxon>
        <taxon>Enterobacterales</taxon>
        <taxon>Enterobacteriaceae</taxon>
        <taxon>Salmonella</taxon>
    </lineage>
</organism>
<proteinExistence type="inferred from homology"/>
<comment type="function">
    <text evidence="1">Activator for CDC42 by directly engaging this Rho GTPase and acting as potent guanine nucleotide exchange factor (GEF). This activation results in actin cytoskeleton rearrangements and stimulates membrane ruffling, promoting bacterial entry into non-phagocytic cells. Chaperone InvB is required for secretion, translocation and stabilization of intracellular levels of sopE2 (By similarity).</text>
</comment>
<comment type="subcellular location">
    <subcellularLocation>
        <location evidence="1">Secreted</location>
    </subcellularLocation>
    <text evidence="1">Secreted via the type III secretion system 1 (SPI-1 T3SS).</text>
</comment>
<comment type="similarity">
    <text evidence="2">Belongs to the GEF (guanine exchange factor) SopE family.</text>
</comment>
<keyword id="KW-0343">GTPase activation</keyword>
<keyword id="KW-0344">Guanine-nucleotide releasing factor</keyword>
<keyword id="KW-0964">Secreted</keyword>
<keyword id="KW-0843">Virulence</keyword>
<name>SOPE2_SALPA</name>